<dbReference type="EMBL" id="CP000921">
    <property type="protein sequence ID" value="ACO23861.1"/>
    <property type="molecule type" value="Genomic_DNA"/>
</dbReference>
<dbReference type="RefSeq" id="WP_001006371.1">
    <property type="nucleotide sequence ID" value="NC_012469.1"/>
</dbReference>
<dbReference type="SMR" id="C1CQE1"/>
<dbReference type="KEGG" id="snt:SPT_0687"/>
<dbReference type="HOGENOM" id="CLU_106658_0_0_9"/>
<dbReference type="Gene3D" id="3.40.50.10360">
    <property type="entry name" value="Hypothetical protein TT1679"/>
    <property type="match status" value="1"/>
</dbReference>
<dbReference type="HAMAP" id="MF_00800">
    <property type="entry name" value="UPF0340"/>
    <property type="match status" value="1"/>
</dbReference>
<dbReference type="InterPro" id="IPR028345">
    <property type="entry name" value="Antibiotic_NAT-like"/>
</dbReference>
<dbReference type="InterPro" id="IPR006340">
    <property type="entry name" value="DUF436"/>
</dbReference>
<dbReference type="NCBIfam" id="TIGR01440">
    <property type="entry name" value="TIGR01440 family protein"/>
    <property type="match status" value="1"/>
</dbReference>
<dbReference type="Pfam" id="PF04260">
    <property type="entry name" value="DUF436"/>
    <property type="match status" value="1"/>
</dbReference>
<dbReference type="PIRSF" id="PIRSF007510">
    <property type="entry name" value="UCP007510"/>
    <property type="match status" value="1"/>
</dbReference>
<dbReference type="SUPFAM" id="SSF110710">
    <property type="entry name" value="TTHA0583/YokD-like"/>
    <property type="match status" value="1"/>
</dbReference>
<gene>
    <name type="ordered locus">SPT_0687</name>
</gene>
<accession>C1CQE1</accession>
<name>Y687_STRZT</name>
<proteinExistence type="inferred from homology"/>
<sequence length="187" mass="20192">MNETQIQRETRQVVEDVLEKTNLKQGALFVLGLSSSEVLGGQIGKESSQEIGELIVETILGILGSRGIHLAVQGCEHVNRALVVERQVAEQFGLEIVSVHPTLHAGGSGQLAAFKFMQDPVEVEFIKAHAGLDIGDTAIGMHVKHVQVPIRPILREIGHAHVTALASRPKLIGGARAHYPQDAIRKS</sequence>
<reference key="1">
    <citation type="journal article" date="2010" name="Genome Biol.">
        <title>Structure and dynamics of the pan-genome of Streptococcus pneumoniae and closely related species.</title>
        <authorList>
            <person name="Donati C."/>
            <person name="Hiller N.L."/>
            <person name="Tettelin H."/>
            <person name="Muzzi A."/>
            <person name="Croucher N.J."/>
            <person name="Angiuoli S.V."/>
            <person name="Oggioni M."/>
            <person name="Dunning Hotopp J.C."/>
            <person name="Hu F.Z."/>
            <person name="Riley D.R."/>
            <person name="Covacci A."/>
            <person name="Mitchell T.J."/>
            <person name="Bentley S.D."/>
            <person name="Kilian M."/>
            <person name="Ehrlich G.D."/>
            <person name="Rappuoli R."/>
            <person name="Moxon E.R."/>
            <person name="Masignani V."/>
        </authorList>
    </citation>
    <scope>NUCLEOTIDE SEQUENCE [LARGE SCALE GENOMIC DNA]</scope>
    <source>
        <strain>Taiwan19F-14</strain>
    </source>
</reference>
<organism>
    <name type="scientific">Streptococcus pneumoniae (strain Taiwan19F-14)</name>
    <dbReference type="NCBI Taxonomy" id="487213"/>
    <lineage>
        <taxon>Bacteria</taxon>
        <taxon>Bacillati</taxon>
        <taxon>Bacillota</taxon>
        <taxon>Bacilli</taxon>
        <taxon>Lactobacillales</taxon>
        <taxon>Streptococcaceae</taxon>
        <taxon>Streptococcus</taxon>
    </lineage>
</organism>
<protein>
    <recommendedName>
        <fullName evidence="1">UPF0340 protein SPT_0687</fullName>
    </recommendedName>
</protein>
<comment type="similarity">
    <text evidence="1">Belongs to the UPF0340 family.</text>
</comment>
<evidence type="ECO:0000255" key="1">
    <source>
        <dbReference type="HAMAP-Rule" id="MF_00800"/>
    </source>
</evidence>
<feature type="chain" id="PRO_1000148531" description="UPF0340 protein SPT_0687">
    <location>
        <begin position="1"/>
        <end position="187"/>
    </location>
</feature>